<organism>
    <name type="scientific">Rickettsia typhi (strain ATCC VR-144 / Wilmington)</name>
    <dbReference type="NCBI Taxonomy" id="257363"/>
    <lineage>
        <taxon>Bacteria</taxon>
        <taxon>Pseudomonadati</taxon>
        <taxon>Pseudomonadota</taxon>
        <taxon>Alphaproteobacteria</taxon>
        <taxon>Rickettsiales</taxon>
        <taxon>Rickettsiaceae</taxon>
        <taxon>Rickettsieae</taxon>
        <taxon>Rickettsia</taxon>
        <taxon>typhus group</taxon>
    </lineage>
</organism>
<feature type="chain" id="PRO_0000229299" description="Bifunctional methyltransferase">
    <location>
        <begin position="1"/>
        <end position="518"/>
    </location>
</feature>
<feature type="region of interest" description="RF MTase">
    <location>
        <begin position="1"/>
        <end position="302"/>
    </location>
</feature>
<feature type="region of interest" description="HemK" evidence="1">
    <location>
        <begin position="1"/>
        <end position="300"/>
    </location>
</feature>
<feature type="region of interest" description="tRNA (guanine-N(7)-)-methyltransferase" evidence="1">
    <location>
        <begin position="301"/>
        <end position="518"/>
    </location>
</feature>
<feature type="region of interest" description="tRNA MTase">
    <location>
        <begin position="305"/>
        <end position="518"/>
    </location>
</feature>
<feature type="active site" evidence="1">
    <location>
        <position position="421"/>
    </location>
</feature>
<feature type="binding site" evidence="1">
    <location>
        <begin position="140"/>
        <end position="144"/>
    </location>
    <ligand>
        <name>S-adenosyl-L-methionine</name>
        <dbReference type="ChEBI" id="CHEBI:59789"/>
    </ligand>
</feature>
<feature type="binding site" evidence="1">
    <location>
        <position position="163"/>
    </location>
    <ligand>
        <name>S-adenosyl-L-methionine</name>
        <dbReference type="ChEBI" id="CHEBI:59789"/>
    </ligand>
</feature>
<feature type="binding site" evidence="1">
    <location>
        <position position="192"/>
    </location>
    <ligand>
        <name>S-adenosyl-L-methionine</name>
        <dbReference type="ChEBI" id="CHEBI:59789"/>
    </ligand>
</feature>
<feature type="binding site" evidence="1">
    <location>
        <begin position="207"/>
        <end position="210"/>
    </location>
    <ligand>
        <name>substrate</name>
    </ligand>
</feature>
<feature type="binding site" evidence="1">
    <location>
        <position position="207"/>
    </location>
    <ligand>
        <name>S-adenosyl-L-methionine</name>
        <dbReference type="ChEBI" id="CHEBI:59789"/>
    </ligand>
</feature>
<feature type="binding site" evidence="1">
    <location>
        <position position="347"/>
    </location>
    <ligand>
        <name>S-adenosyl-L-methionine</name>
        <dbReference type="ChEBI" id="CHEBI:59789"/>
    </ligand>
</feature>
<feature type="binding site" evidence="1">
    <location>
        <position position="372"/>
    </location>
    <ligand>
        <name>S-adenosyl-L-methionine</name>
        <dbReference type="ChEBI" id="CHEBI:59789"/>
    </ligand>
</feature>
<feature type="binding site" evidence="1">
    <location>
        <position position="399"/>
    </location>
    <ligand>
        <name>S-adenosyl-L-methionine</name>
        <dbReference type="ChEBI" id="CHEBI:59789"/>
    </ligand>
</feature>
<feature type="binding site" evidence="1">
    <location>
        <position position="421"/>
    </location>
    <ligand>
        <name>S-adenosyl-L-methionine</name>
        <dbReference type="ChEBI" id="CHEBI:59789"/>
    </ligand>
</feature>
<feature type="binding site" evidence="1">
    <location>
        <position position="425"/>
    </location>
    <ligand>
        <name>substrate</name>
    </ligand>
</feature>
<feature type="binding site" evidence="1">
    <location>
        <position position="457"/>
    </location>
    <ligand>
        <name>substrate</name>
    </ligand>
</feature>
<gene>
    <name type="primary">prmC/trmB</name>
    <name type="synonym">hemK</name>
    <name type="ordered locus">RT0836</name>
</gene>
<keyword id="KW-0489">Methyltransferase</keyword>
<keyword id="KW-0949">S-adenosyl-L-methionine</keyword>
<keyword id="KW-0808">Transferase</keyword>
<keyword id="KW-0819">tRNA processing</keyword>
<accession>Q68VR6</accession>
<sequence length="518" mass="59700">MQYSIKQILNNANDKLNKIGINLPELEARILLQHVTNKPIEHLLIKLNEQLSEAEIEAFEKLLERRLEHEPIAYITGIKEFYSREFIVNKHVLIPRIDTEILIDVVIGLVVSRNDLNTCSKLKSLDSVKTIQHYNILELGTGSGCIAISLLCELPNTSVIATDISVDAIKVAKSNTIKHNVTDRIQIIHSNWFEKLNKQKFDLIVSNPPYISHSEKLEMAIETINYEPHIALFAEEDGLEAYSIIAKNAKQFLKPNGKIILEIGFSQAEKVCQIFLNYGYNIDHIYQDLQSHNRVIEISPINLNRSYARRIGKSLSKMQQKLLDNELPKYLFSKEKFASEKRKIFLEIGFGMGEHFINQAKINPDTLFIGVEVYLNGVANVLKHAAQHNIMNFLLFPNNLDLILNDLPNNSLDGIYILFPDPWIKNKKKKKRILNKERLNILQNKLKNNGNLVFASDIENYFYETITLIRQNGNFEIIHNDDYLKPHDNYIITKYHQKAINENRTAKFMILQHALTGH</sequence>
<protein>
    <recommendedName>
        <fullName>Bifunctional methyltransferase</fullName>
    </recommendedName>
    <domain>
        <recommendedName>
            <fullName>Release factor glutamine methyltransferase</fullName>
            <shortName>RF MTase</shortName>
            <ecNumber>2.1.1.297</ecNumber>
        </recommendedName>
        <alternativeName>
            <fullName>N5-glutamine methyltransferase PrmC</fullName>
        </alternativeName>
        <alternativeName>
            <fullName>Protein-(glutamine-N5) MTase PrmC</fullName>
        </alternativeName>
        <alternativeName>
            <fullName>Protein-glutamine N-methyltransferase PrmC</fullName>
        </alternativeName>
    </domain>
    <domain>
        <recommendedName>
            <fullName>tRNA (guanine-N(7)-)-methyltransferase</fullName>
            <ecNumber>2.1.1.33</ecNumber>
        </recommendedName>
        <alternativeName>
            <fullName>tRNA (guanine(46)-N(7))-methyltransferase</fullName>
        </alternativeName>
        <alternativeName>
            <fullName>tRNA(m7G46)-methyltransferase</fullName>
        </alternativeName>
    </domain>
</protein>
<name>RFTRM_RICTY</name>
<comment type="function">
    <text evidence="1">Methylates the class 1 translation termination release factors RF1/PrfA and RF2/PrfB on the glutamine residue of the universally conserved GGQ motif.</text>
</comment>
<comment type="function">
    <text evidence="1">Catalyzes the formation of N(7)-methylguanine at position 46 (m7G46) in tRNA.</text>
</comment>
<comment type="catalytic activity">
    <reaction>
        <text>L-glutaminyl-[peptide chain release factor] + S-adenosyl-L-methionine = N(5)-methyl-L-glutaminyl-[peptide chain release factor] + S-adenosyl-L-homocysteine + H(+)</text>
        <dbReference type="Rhea" id="RHEA:42896"/>
        <dbReference type="Rhea" id="RHEA-COMP:10271"/>
        <dbReference type="Rhea" id="RHEA-COMP:10272"/>
        <dbReference type="ChEBI" id="CHEBI:15378"/>
        <dbReference type="ChEBI" id="CHEBI:30011"/>
        <dbReference type="ChEBI" id="CHEBI:57856"/>
        <dbReference type="ChEBI" id="CHEBI:59789"/>
        <dbReference type="ChEBI" id="CHEBI:61891"/>
        <dbReference type="EC" id="2.1.1.297"/>
    </reaction>
</comment>
<comment type="catalytic activity">
    <reaction>
        <text>guanosine(46) in tRNA + S-adenosyl-L-methionine = N(7)-methylguanosine(46) in tRNA + S-adenosyl-L-homocysteine</text>
        <dbReference type="Rhea" id="RHEA:42708"/>
        <dbReference type="Rhea" id="RHEA-COMP:10188"/>
        <dbReference type="Rhea" id="RHEA-COMP:10189"/>
        <dbReference type="ChEBI" id="CHEBI:57856"/>
        <dbReference type="ChEBI" id="CHEBI:59789"/>
        <dbReference type="ChEBI" id="CHEBI:74269"/>
        <dbReference type="ChEBI" id="CHEBI:74480"/>
        <dbReference type="EC" id="2.1.1.33"/>
    </reaction>
</comment>
<comment type="similarity">
    <text evidence="2">In the C-terminal section; belongs to the class I-like SAM-binding methyltransferase superfamily. TrmB family.</text>
</comment>
<comment type="similarity">
    <text evidence="2">In the N-terminal section; belongs to the protein N5-glutamine methyltransferase family. PrmC subfamily.</text>
</comment>
<reference key="1">
    <citation type="journal article" date="2004" name="J. Bacteriol.">
        <title>Complete genome sequence of Rickettsia typhi and comparison with sequences of other Rickettsiae.</title>
        <authorList>
            <person name="McLeod M.P."/>
            <person name="Qin X."/>
            <person name="Karpathy S.E."/>
            <person name="Gioia J."/>
            <person name="Highlander S.K."/>
            <person name="Fox G.E."/>
            <person name="McNeill T.Z."/>
            <person name="Jiang H."/>
            <person name="Muzny D."/>
            <person name="Jacob L.S."/>
            <person name="Hawes A.C."/>
            <person name="Sodergren E."/>
            <person name="Gill R."/>
            <person name="Hume J."/>
            <person name="Morgan M."/>
            <person name="Fan G."/>
            <person name="Amin A.G."/>
            <person name="Gibbs R.A."/>
            <person name="Hong C."/>
            <person name="Yu X.-J."/>
            <person name="Walker D.H."/>
            <person name="Weinstock G.M."/>
        </authorList>
    </citation>
    <scope>NUCLEOTIDE SEQUENCE [LARGE SCALE GENOMIC DNA]</scope>
    <source>
        <strain>ATCC VR-144 / Wilmington</strain>
    </source>
</reference>
<proteinExistence type="inferred from homology"/>
<evidence type="ECO:0000250" key="1"/>
<evidence type="ECO:0000305" key="2"/>
<dbReference type="EC" id="2.1.1.297"/>
<dbReference type="EC" id="2.1.1.33"/>
<dbReference type="EMBL" id="AE017197">
    <property type="protein sequence ID" value="AAU04290.1"/>
    <property type="molecule type" value="Genomic_DNA"/>
</dbReference>
<dbReference type="SMR" id="Q68VR6"/>
<dbReference type="KEGG" id="rty:RT0836"/>
<dbReference type="eggNOG" id="COG0220">
    <property type="taxonomic scope" value="Bacteria"/>
</dbReference>
<dbReference type="eggNOG" id="COG2890">
    <property type="taxonomic scope" value="Bacteria"/>
</dbReference>
<dbReference type="HOGENOM" id="CLU_018398_3_3_5"/>
<dbReference type="OrthoDB" id="9800643at2"/>
<dbReference type="Proteomes" id="UP000000604">
    <property type="component" value="Chromosome"/>
</dbReference>
<dbReference type="GO" id="GO:0003676">
    <property type="term" value="F:nucleic acid binding"/>
    <property type="evidence" value="ECO:0007669"/>
    <property type="project" value="InterPro"/>
</dbReference>
<dbReference type="GO" id="GO:0102559">
    <property type="term" value="F:protein-(glutamine-N5) methyltransferase activity"/>
    <property type="evidence" value="ECO:0007669"/>
    <property type="project" value="UniProtKB-EC"/>
</dbReference>
<dbReference type="GO" id="GO:0036009">
    <property type="term" value="F:protein-glutamine N-methyltransferase activity"/>
    <property type="evidence" value="ECO:0007669"/>
    <property type="project" value="UniProtKB-UniRule"/>
</dbReference>
<dbReference type="GO" id="GO:0008176">
    <property type="term" value="F:tRNA (guanine(46)-N7)-methyltransferase activity"/>
    <property type="evidence" value="ECO:0007669"/>
    <property type="project" value="UniProtKB-UniRule"/>
</dbReference>
<dbReference type="CDD" id="cd02440">
    <property type="entry name" value="AdoMet_MTases"/>
    <property type="match status" value="1"/>
</dbReference>
<dbReference type="Gene3D" id="1.10.8.10">
    <property type="entry name" value="DNA helicase RuvA subunit, C-terminal domain"/>
    <property type="match status" value="1"/>
</dbReference>
<dbReference type="Gene3D" id="3.40.50.150">
    <property type="entry name" value="Vaccinia Virus protein VP39"/>
    <property type="match status" value="2"/>
</dbReference>
<dbReference type="HAMAP" id="MF_02126">
    <property type="entry name" value="RF_methyltr_PrmC"/>
    <property type="match status" value="1"/>
</dbReference>
<dbReference type="HAMAP" id="MF_01057">
    <property type="entry name" value="tRNA_methyltr_TrmB"/>
    <property type="match status" value="1"/>
</dbReference>
<dbReference type="InterPro" id="IPR002052">
    <property type="entry name" value="DNA_methylase_N6_adenine_CS"/>
</dbReference>
<dbReference type="InterPro" id="IPR004556">
    <property type="entry name" value="HemK-like"/>
</dbReference>
<dbReference type="InterPro" id="IPR050320">
    <property type="entry name" value="N5-glutamine_MTase"/>
</dbReference>
<dbReference type="InterPro" id="IPR040758">
    <property type="entry name" value="PrmC_N"/>
</dbReference>
<dbReference type="InterPro" id="IPR019874">
    <property type="entry name" value="RF_methyltr_PrmC"/>
</dbReference>
<dbReference type="InterPro" id="IPR029063">
    <property type="entry name" value="SAM-dependent_MTases_sf"/>
</dbReference>
<dbReference type="InterPro" id="IPR007848">
    <property type="entry name" value="Small_mtfrase_dom"/>
</dbReference>
<dbReference type="InterPro" id="IPR003358">
    <property type="entry name" value="tRNA_(Gua-N-7)_MeTrfase_Trmb"/>
</dbReference>
<dbReference type="InterPro" id="IPR055361">
    <property type="entry name" value="tRNA_methyltr_TrmB_bact"/>
</dbReference>
<dbReference type="NCBIfam" id="TIGR00536">
    <property type="entry name" value="hemK_fam"/>
    <property type="match status" value="1"/>
</dbReference>
<dbReference type="NCBIfam" id="NF002421">
    <property type="entry name" value="PRK01544.1"/>
    <property type="match status" value="1"/>
</dbReference>
<dbReference type="NCBIfam" id="TIGR03534">
    <property type="entry name" value="RF_mod_PrmC"/>
    <property type="match status" value="1"/>
</dbReference>
<dbReference type="NCBIfam" id="TIGR00091">
    <property type="entry name" value="tRNA (guanosine(46)-N7)-methyltransferase TrmB"/>
    <property type="match status" value="1"/>
</dbReference>
<dbReference type="PANTHER" id="PTHR18895">
    <property type="entry name" value="HEMK METHYLTRANSFERASE"/>
    <property type="match status" value="1"/>
</dbReference>
<dbReference type="PANTHER" id="PTHR18895:SF74">
    <property type="entry name" value="MTRF1L RELEASE FACTOR GLUTAMINE METHYLTRANSFERASE"/>
    <property type="match status" value="1"/>
</dbReference>
<dbReference type="Pfam" id="PF02390">
    <property type="entry name" value="Methyltransf_4"/>
    <property type="match status" value="1"/>
</dbReference>
<dbReference type="Pfam" id="PF05175">
    <property type="entry name" value="MTS"/>
    <property type="match status" value="1"/>
</dbReference>
<dbReference type="Pfam" id="PF17827">
    <property type="entry name" value="PrmC_N"/>
    <property type="match status" value="1"/>
</dbReference>
<dbReference type="SUPFAM" id="SSF53335">
    <property type="entry name" value="S-adenosyl-L-methionine-dependent methyltransferases"/>
    <property type="match status" value="2"/>
</dbReference>
<dbReference type="PROSITE" id="PS51625">
    <property type="entry name" value="SAM_MT_TRMB"/>
    <property type="match status" value="1"/>
</dbReference>